<reference key="1">
    <citation type="submission" date="2009-03" db="EMBL/GenBank/DDBJ databases">
        <title>Brucella melitensis ATCC 23457 whole genome shotgun sequencing project.</title>
        <authorList>
            <person name="Setubal J.C."/>
            <person name="Boyle S."/>
            <person name="Crasta O.R."/>
            <person name="Gillespie J.J."/>
            <person name="Kenyon R.W."/>
            <person name="Lu J."/>
            <person name="Mane S."/>
            <person name="Nagrani S."/>
            <person name="Shallom J.M."/>
            <person name="Shallom S."/>
            <person name="Shukla M."/>
            <person name="Snyder E.E."/>
            <person name="Sobral B.W."/>
            <person name="Wattam A.R."/>
            <person name="Will R."/>
            <person name="Williams K."/>
            <person name="Yoo H."/>
            <person name="Munk C."/>
            <person name="Tapia R."/>
            <person name="Han C."/>
            <person name="Detter J.C."/>
            <person name="Bruce D."/>
            <person name="Brettin T.S."/>
        </authorList>
    </citation>
    <scope>NUCLEOTIDE SEQUENCE [LARGE SCALE GENOMIC DNA]</scope>
    <source>
        <strain>ATCC 23457</strain>
    </source>
</reference>
<gene>
    <name evidence="1" type="primary">ctaG</name>
    <name type="ordered locus">BMEA_A0507</name>
</gene>
<organism>
    <name type="scientific">Brucella melitensis biotype 2 (strain ATCC 23457)</name>
    <dbReference type="NCBI Taxonomy" id="546272"/>
    <lineage>
        <taxon>Bacteria</taxon>
        <taxon>Pseudomonadati</taxon>
        <taxon>Pseudomonadota</taxon>
        <taxon>Alphaproteobacteria</taxon>
        <taxon>Hyphomicrobiales</taxon>
        <taxon>Brucellaceae</taxon>
        <taxon>Brucella/Ochrobactrum group</taxon>
        <taxon>Brucella</taxon>
    </lineage>
</organism>
<feature type="chain" id="PRO_1000123361" description="Cytochrome c oxidase assembly protein CtaG">
    <location>
        <begin position="1"/>
        <end position="201"/>
    </location>
</feature>
<feature type="topological domain" description="Cytoplasmic" evidence="1">
    <location>
        <begin position="1"/>
        <end position="13"/>
    </location>
</feature>
<feature type="transmembrane region" description="Helical; Signal-anchor for type II membrane protein" evidence="1">
    <location>
        <begin position="14"/>
        <end position="36"/>
    </location>
</feature>
<feature type="topological domain" description="Periplasmic" evidence="1">
    <location>
        <begin position="37"/>
        <end position="201"/>
    </location>
</feature>
<accession>C0RHH8</accession>
<proteinExistence type="inferred from homology"/>
<keyword id="KW-0997">Cell inner membrane</keyword>
<keyword id="KW-1003">Cell membrane</keyword>
<keyword id="KW-0186">Copper</keyword>
<keyword id="KW-0472">Membrane</keyword>
<keyword id="KW-0735">Signal-anchor</keyword>
<keyword id="KW-0812">Transmembrane</keyword>
<keyword id="KW-1133">Transmembrane helix</keyword>
<name>COXZ_BRUMB</name>
<evidence type="ECO:0000255" key="1">
    <source>
        <dbReference type="HAMAP-Rule" id="MF_00155"/>
    </source>
</evidence>
<comment type="function">
    <text evidence="1">Exerts its effect at some terminal stage of cytochrome c oxidase synthesis, probably by being involved in the insertion of the copper B into subunit I.</text>
</comment>
<comment type="subcellular location">
    <subcellularLocation>
        <location evidence="1">Cell inner membrane</location>
        <topology evidence="1">Single-pass type II membrane protein</topology>
        <orientation evidence="1">Periplasmic side</orientation>
    </subcellularLocation>
</comment>
<comment type="similarity">
    <text evidence="1">Belongs to the COX11/CtaG family.</text>
</comment>
<protein>
    <recommendedName>
        <fullName evidence="1">Cytochrome c oxidase assembly protein CtaG</fullName>
    </recommendedName>
</protein>
<dbReference type="EMBL" id="CP001488">
    <property type="protein sequence ID" value="ACO00286.1"/>
    <property type="molecule type" value="Genomic_DNA"/>
</dbReference>
<dbReference type="RefSeq" id="WP_004683133.1">
    <property type="nucleotide sequence ID" value="NC_012441.1"/>
</dbReference>
<dbReference type="SMR" id="C0RHH8"/>
<dbReference type="KEGG" id="bmi:BMEA_A0507"/>
<dbReference type="HOGENOM" id="CLU_045000_5_0_5"/>
<dbReference type="Proteomes" id="UP000001748">
    <property type="component" value="Chromosome I"/>
</dbReference>
<dbReference type="GO" id="GO:0005886">
    <property type="term" value="C:plasma membrane"/>
    <property type="evidence" value="ECO:0007669"/>
    <property type="project" value="UniProtKB-SubCell"/>
</dbReference>
<dbReference type="GO" id="GO:0005507">
    <property type="term" value="F:copper ion binding"/>
    <property type="evidence" value="ECO:0007669"/>
    <property type="project" value="InterPro"/>
</dbReference>
<dbReference type="GO" id="GO:0008535">
    <property type="term" value="P:respiratory chain complex IV assembly"/>
    <property type="evidence" value="ECO:0007669"/>
    <property type="project" value="UniProtKB-UniRule"/>
</dbReference>
<dbReference type="FunFam" id="2.60.370.10:FF:000001">
    <property type="entry name" value="COX11 cytochrome c oxidase assembly homolog"/>
    <property type="match status" value="1"/>
</dbReference>
<dbReference type="Gene3D" id="2.60.370.10">
    <property type="entry name" value="Ctag/Cox11"/>
    <property type="match status" value="1"/>
</dbReference>
<dbReference type="HAMAP" id="MF_00155">
    <property type="entry name" value="CtaG"/>
    <property type="match status" value="1"/>
</dbReference>
<dbReference type="InterPro" id="IPR023471">
    <property type="entry name" value="CtaG/Cox11_dom_sf"/>
</dbReference>
<dbReference type="InterPro" id="IPR007533">
    <property type="entry name" value="Cyt_c_oxidase_assmbl_CtaG"/>
</dbReference>
<dbReference type="NCBIfam" id="NF003465">
    <property type="entry name" value="PRK05089.1"/>
    <property type="match status" value="1"/>
</dbReference>
<dbReference type="PANTHER" id="PTHR21320:SF3">
    <property type="entry name" value="CYTOCHROME C OXIDASE ASSEMBLY PROTEIN COX11, MITOCHONDRIAL-RELATED"/>
    <property type="match status" value="1"/>
</dbReference>
<dbReference type="PANTHER" id="PTHR21320">
    <property type="entry name" value="CYTOCHROME C OXIDASE ASSEMBLY PROTEIN COX11-RELATED"/>
    <property type="match status" value="1"/>
</dbReference>
<dbReference type="Pfam" id="PF04442">
    <property type="entry name" value="CtaG_Cox11"/>
    <property type="match status" value="1"/>
</dbReference>
<dbReference type="PIRSF" id="PIRSF005413">
    <property type="entry name" value="COX11"/>
    <property type="match status" value="1"/>
</dbReference>
<dbReference type="SUPFAM" id="SSF110111">
    <property type="entry name" value="Ctag/Cox11"/>
    <property type="match status" value="1"/>
</dbReference>
<sequence>MTDQGENEKKQRRSNATIAVACLSFFVCMIGAAYASVPLYRIFCQVTGYGGTTQRVEQYSDTILDKTIKVRFDANIANGLPWDFKPMQREVTVRIGETTMIKYEAHNLFGEETYGRASFNVAPGRAGAYFNKVECFCFTDNTLKPGEDLELPVVFFVDPEFVNDPDLKDVKTITLSYTFFPIDKPKPVVNAKAVGSTRNGG</sequence>